<keyword id="KW-0965">Cell junction</keyword>
<keyword id="KW-1003">Cell membrane</keyword>
<keyword id="KW-0175">Coiled coil</keyword>
<keyword id="KW-0968">Cytoplasmic vesicle</keyword>
<keyword id="KW-0325">Glycoprotein</keyword>
<keyword id="KW-0433">Leucine-rich repeat</keyword>
<keyword id="KW-0472">Membrane</keyword>
<keyword id="KW-0477">Merozoite</keyword>
<keyword id="KW-0597">Phosphoprotein</keyword>
<keyword id="KW-0675">Receptor</keyword>
<keyword id="KW-1185">Reference proteome</keyword>
<keyword id="KW-0677">Repeat</keyword>
<keyword id="KW-0964">Secreted</keyword>
<keyword id="KW-0732">Signal</keyword>
<keyword id="KW-0796">Tight junction</keyword>
<keyword id="KW-0812">Transmembrane</keyword>
<keyword id="KW-1133">Transmembrane helix</keyword>
<proteinExistence type="evidence at protein level"/>
<organism>
    <name type="scientific">Plasmodium falciparum (isolate 3D7)</name>
    <dbReference type="NCBI Taxonomy" id="36329"/>
    <lineage>
        <taxon>Eukaryota</taxon>
        <taxon>Sar</taxon>
        <taxon>Alveolata</taxon>
        <taxon>Apicomplexa</taxon>
        <taxon>Aconoidasida</taxon>
        <taxon>Haemosporida</taxon>
        <taxon>Plasmodiidae</taxon>
        <taxon>Plasmodium</taxon>
        <taxon>Plasmodium (Laverania)</taxon>
    </lineage>
</organism>
<gene>
    <name evidence="13" type="primary">RH2b</name>
    <name type="ORF">MAL13P1.176</name>
    <name type="ORF">PF3D7_1335300</name>
</gene>
<accession>C0H5F4</accession>
<accession>Q7YWE9</accession>
<accession>Q9BK45</accession>
<sequence length="3254" mass="382883">MKTTLFCSISFCNIIFFFLELSHEHFVGQSSNTHGASSVTDFNFSEEKNLKSFEGKNNNNDNYASINRLYRKKPYMKRSLINLENDLFRLEPISYIQRYYKKNINRSDIFHNKKERGSKVYSNVSSFHSFIQEGKEEVEVFSIWGSNSVLDHIDVLRDNGTVVFSVQPYYLDIYTCKEAILFTTSFYKDLDKSSITKINEDIEKFNEEIIKNEEQCLVGGKTDFDNLLIVLENAEKANVRKTLFDNTFNDYKNKKSSFYNCLKNKKNDYDKKIKNIKNEITKLLKNIESTGNMCKTESYVMNNNLYLLRVNEVKSTPIDLYLNRAKELLESSSKLVNPIKMKLGDNKNMYSIGYIHDEIKDIIKRYNFHLKHIEKGKEYIKRITQANNIADKMKKDELIKKIFESSKHFASFKYSNEMISKLDSLFIKNEEILNNLFNNIFNIFKKKYETYVDMKTIESKYTTVMTLSEHLLEYAMDVLKANPQKPIDPKANLDSEVVKLQIKINEKSNELDNAISQVKTLIIIMKSFYDIIISEKASMDEMEKKELSLNNYIEKTDYILQTYNIFKSKSNIINNNSKNISSKYITIEGLKNDIDELNSLISYFKDSQETLIKDDELKKNMKTDYLNNVKYIEENVTHINEIILLKDSITQRIADIDELNSLNLININDFINEKNISQEKVSYNLNKLYKGSFEELESELSHFLDTKYLFHEKKSVNELQTILNTSNNECAKLNFMKSDNNNNNNNSNIINLLKTELSHLLSLKENIIKKLLNHIEQNIQNSSNKYTITYTDINNRMEDYKEEIESLEVYKHTIGNIQKEYILHLYENDKNALAVHNTSMQILQYKDAIQNIKNKISDDIKILKKYKEMNQDLLNYYEILDKKLKDNTYIKEMHTASLVQITQYIPYEDKTISELEQEFNNNNQKLDNILQDINAMNLNINILQTLNIGINACNTNNKNVEHLLNKKIELKNILNDQMKIIKNDDIIQDNEKENFSNVLKKEEEKLEKELDDIKFNNLKMDIHKLLNSYDHTKQNIESNLKINLDSFEKEKDSWVHFKSTIDSLYVEYNICNQKTHNTIKQQKNDIIELIYKRIKDINQEIIEKVDNYYSLSDKALTKLKSIHFNIDKEKYKNPKSQENIKLLEDRVMILEKKIKEDKDALIQIKNLSHDHFVNADNEKKKQKEKEEDDEQTHYSKKRKVMGDIYKDIKKNLDELNNKNLIDITLNEANKIESEYEKILIDDICEQITNEAKKSDTIKEKIESYKKDIDYVDVDVSKTRNDHHLNGDKIHDSFFYEDTLNYKAYFDKLKDLYENINKLTNESNGLKSDAHNNNTQVDKLKEINLQVFSNLGNIIKYVEKLENTLHELKDMYEFLETIDINKILKSIHNSMKKSEEYSNETKKIFEQSVNITNQFIEDVEILKTSINPNYESLNDDQIDDNIKSLVLKKEEISEKRKQVNKYITDIESNKEQSDLHLRYASRSIYVIDLFIKHEIINPSDGKNFDIIKVKEMINKTKQVSNEAMEYANKMDEKNKDIIKIENELYNLINNNIRSLKGVKYEKVRKQARNAIDDINNIHSNIKTILTKSKERLDEIKKQPNIKREGDVLNNDKTKIAYITIQINNGRIESNLLNILNMKHNIDTILNKAMDYMNDVSKSDQIVINIDSLNMNDIYNKDKDLLINILKEKQNMEAEYKKMNEMYNYVNETEKEIIKHKKNYEIRIMEHIKKETNEKKKKFMESNNKSLTTLMDSFRSMFYNEYINDYNINENFEKHQNILNEIYNGFNESYNIINTKMTEIINDNLDYNEIKEIKEVAQTEYDKLNKKVDELKNYLNNIKEQEGHRLIDYIKEKIFNLYIKCSEQQNIIDDSYNYITVKKQYIKTIEDVKFLLDSLNTIEEKNKSVANLEICTNKEDIKNLLKHVIKLANFSGIIVMSDTNTEITPENPLEDNDLLNLQLYFERKHEITSTLENDSDLELDHLGSNSDESIDNLKVYNDIIELHTYSTQILKYLDNIQKLKGDCNDLVKDCKELRELSTALYDLKIQITSVINRENDISNNIDIVSNKLNEIDAIQYNFEKYKEIFDNVEEYKTLDDTKNAYIVKKAEILKNVDINKTKEDLDIYFNDLDELEKSLTLSSNEMEIKTIVQNSYNSFSDINKNINDIDKEMKTLIPMLDELLNEGHNIDISLYNFIIRNIQIKIGNDIKNIREQENDTNICFEYIQNNYNFIKSDISIFNKYDDHIKVDNYISNNIDVVNKHNSLLSEHVINATNIIENIMTSIVEINEDTEMNSLEETQDKLLELYENFKKEKNIINNNYKIVHFNKLKEIENSLETYNSISTNFNKINETQNIDILKNEFNNIKTKINDKVKELVHVDSTLTLESIQTFNNLYGDLMSNIQDVYKYEDINNVELKKVKLYIENITNLLGRINTFIKELDKYQDENNGIDKYIEINKENNSYIIKLKEKANNLKENFSKLLQNIKRNETELYNINNIKDDIMNTGKSVNNIKQKFSSNLPLKEKLFQMEEMLLNINNIMNETKRISNTDAYTNITLQDIENNKNKENNNMNIETIDKLIDHIKIHNEKIQAEILIIDDAKRKVKEITDNINKAFNEITENYNNENNGVIKSAKNIVDKATYLNNELDKFLLKLNELLSHNNNDIKDLGDEKLILKEEEERKERERLEKAKQEEERKERERIEKEKQEKERLEREKQEQLKKEALKKQEQERQEQQQKEEALKRQEQERLQKEEELKRQEQERLEREKQEQLQKEEELRKKEQEKQQQRNIQELEEQKKPEIINEALVKGDKILEGSDQRNMELSKPNVSMDNTNNSPISNSEITESDDIDNSENIHTSHMSDIESTQTSHRSNTHGQQISDIVEDQITHPSNIGGEKITHNDEISITGERNNISDVNDYSESSNIFENGDSTINTSTRNTSSTHDESHISPISNAYDHVVSDNKKSMDENIKDKLKIDESITTDEQIRLDDNSNIVRIDSTDQRDASSHGSSNRDDDEISHVGSDIHMDSVDIHDSIDTDENADHRHNVNSVDSLSSSDYTDTQKDFSSIIKDGGNKEGHAENESKEYESQTEQTHEEGIMNPNKYSISEVDGIKLNEEAKHKITEKLVDIYPSTYRTLDEPMETHGPNEKFHMFGSPYVTEEDYTEKHDYDKHEDFNNERYSNHNKMDDFVYNAGGVVCCVLFFASITFFSMDRSNKDECDFDMCEEVNNNDHLSNYADKEEIIEIVFDENEEKYF</sequence>
<dbReference type="EMBL" id="AF312917">
    <property type="protein sequence ID" value="AAK19245.1"/>
    <property type="molecule type" value="Genomic_DNA"/>
</dbReference>
<dbReference type="EMBL" id="AY138500">
    <property type="protein sequence ID" value="AAN39447.1"/>
    <property type="molecule type" value="Genomic_DNA"/>
</dbReference>
<dbReference type="EMBL" id="AY005149">
    <property type="protein sequence ID" value="AAG02259.1"/>
    <property type="molecule type" value="Genomic_DNA"/>
</dbReference>
<dbReference type="EMBL" id="AL844509">
    <property type="protein sequence ID" value="CAX64332.2"/>
    <property type="molecule type" value="Genomic_DNA"/>
</dbReference>
<dbReference type="SMR" id="C0H5F4"/>
<dbReference type="BioGRID" id="1209000">
    <property type="interactions" value="1"/>
</dbReference>
<dbReference type="FunCoup" id="C0H5F4">
    <property type="interactions" value="1"/>
</dbReference>
<dbReference type="STRING" id="36329.C0H5F4"/>
<dbReference type="GlyCosmos" id="C0H5F4">
    <property type="glycosylation" value="40 sites, No reported glycans"/>
</dbReference>
<dbReference type="iPTMnet" id="C0H5F4"/>
<dbReference type="PaxDb" id="5833-MAL13P1.176"/>
<dbReference type="EnsemblProtists" id="CAX64332">
    <property type="protein sequence ID" value="CAX64332"/>
    <property type="gene ID" value="PF3D7_1335300"/>
</dbReference>
<dbReference type="VEuPathDB" id="PlasmoDB:PF3D7_1335300"/>
<dbReference type="VEuPathDB" id="PlasmoDB:PF3D7_1335400"/>
<dbReference type="VEuPathDB" id="PlasmoDB:Pf7G8-2_000438000"/>
<dbReference type="VEuPathDB" id="PlasmoDB:Pf7G8_130039700"/>
<dbReference type="VEuPathDB" id="PlasmoDB:PfCD01_130040900"/>
<dbReference type="VEuPathDB" id="PlasmoDB:PfCD01_130041000"/>
<dbReference type="VEuPathDB" id="PlasmoDB:PfDd2_130041200"/>
<dbReference type="VEuPathDB" id="PlasmoDB:PfGA01_130041400"/>
<dbReference type="VEuPathDB" id="PlasmoDB:PfGA01_130041500"/>
<dbReference type="VEuPathDB" id="PlasmoDB:PfGB4_130041200"/>
<dbReference type="VEuPathDB" id="PlasmoDB:PfGN01_130042100"/>
<dbReference type="VEuPathDB" id="PlasmoDB:PfHB3_130041600"/>
<dbReference type="VEuPathDB" id="PlasmoDB:PfIT_130040700"/>
<dbReference type="VEuPathDB" id="PlasmoDB:PfKE01_130040900"/>
<dbReference type="VEuPathDB" id="PlasmoDB:PfKH01_130039400"/>
<dbReference type="VEuPathDB" id="PlasmoDB:PfKH02_130038200"/>
<dbReference type="VEuPathDB" id="PlasmoDB:PfNF135_130039900"/>
<dbReference type="VEuPathDB" id="PlasmoDB:PfNF166_130040500"/>
<dbReference type="VEuPathDB" id="PlasmoDB:PfNF54_130040300"/>
<dbReference type="VEuPathDB" id="PlasmoDB:PfSD01_130042000"/>
<dbReference type="VEuPathDB" id="PlasmoDB:PfSN01_130038300"/>
<dbReference type="VEuPathDB" id="PlasmoDB:PfSN01_130038400"/>
<dbReference type="VEuPathDB" id="PlasmoDB:PfTG01_130041000"/>
<dbReference type="HOGENOM" id="CLU_225324_0_0_1"/>
<dbReference type="InParanoid" id="C0H5F4"/>
<dbReference type="OMA" id="GTGNMCK"/>
<dbReference type="OrthoDB" id="386780at2759"/>
<dbReference type="PhylomeDB" id="C0H5F4"/>
<dbReference type="Proteomes" id="UP000001450">
    <property type="component" value="Chromosome 13"/>
</dbReference>
<dbReference type="GO" id="GO:0016324">
    <property type="term" value="C:apical plasma membrane"/>
    <property type="evidence" value="ECO:0000314"/>
    <property type="project" value="UniProtKB"/>
</dbReference>
<dbReference type="GO" id="GO:0031410">
    <property type="term" value="C:cytoplasmic vesicle"/>
    <property type="evidence" value="ECO:0007669"/>
    <property type="project" value="UniProtKB-KW"/>
</dbReference>
<dbReference type="GO" id="GO:0005615">
    <property type="term" value="C:extracellular space"/>
    <property type="evidence" value="ECO:0000314"/>
    <property type="project" value="UniProtKB"/>
</dbReference>
<dbReference type="GO" id="GO:0044647">
    <property type="term" value="C:host-symbiont bicellular tight junction"/>
    <property type="evidence" value="ECO:0000314"/>
    <property type="project" value="UniProtKB"/>
</dbReference>
<dbReference type="GO" id="GO:0016020">
    <property type="term" value="C:membrane"/>
    <property type="evidence" value="ECO:0000250"/>
    <property type="project" value="UniProtKB"/>
</dbReference>
<dbReference type="GO" id="GO:0005886">
    <property type="term" value="C:plasma membrane"/>
    <property type="evidence" value="ECO:0000314"/>
    <property type="project" value="UniProtKB"/>
</dbReference>
<dbReference type="GO" id="GO:0020008">
    <property type="term" value="C:rhoptry"/>
    <property type="evidence" value="ECO:0000314"/>
    <property type="project" value="GeneDB"/>
</dbReference>
<dbReference type="GO" id="GO:1990225">
    <property type="term" value="C:rhoptry neck"/>
    <property type="evidence" value="ECO:0000314"/>
    <property type="project" value="UniProtKB"/>
</dbReference>
<dbReference type="GO" id="GO:0070160">
    <property type="term" value="C:tight junction"/>
    <property type="evidence" value="ECO:0000314"/>
    <property type="project" value="UniProtKB"/>
</dbReference>
<dbReference type="GO" id="GO:0008201">
    <property type="term" value="F:heparin binding"/>
    <property type="evidence" value="ECO:0000314"/>
    <property type="project" value="GeneDB"/>
</dbReference>
<dbReference type="GO" id="GO:0046789">
    <property type="term" value="F:host cell surface receptor binding"/>
    <property type="evidence" value="ECO:0000315"/>
    <property type="project" value="UniProtKB"/>
</dbReference>
<dbReference type="GO" id="GO:0044650">
    <property type="term" value="P:adhesion of symbiont to host cell"/>
    <property type="evidence" value="ECO:0000314"/>
    <property type="project" value="UniProtKB"/>
</dbReference>
<dbReference type="GO" id="GO:0098609">
    <property type="term" value="P:cell-cell adhesion"/>
    <property type="evidence" value="ECO:0000250"/>
    <property type="project" value="UniProtKB"/>
</dbReference>
<dbReference type="GO" id="GO:0044409">
    <property type="term" value="P:symbiont entry into host"/>
    <property type="evidence" value="ECO:0000315"/>
    <property type="project" value="UniProtKB"/>
</dbReference>
<dbReference type="PANTHER" id="PTHR13270">
    <property type="entry name" value="PROTEIN C20ORF116-RELATED"/>
    <property type="match status" value="1"/>
</dbReference>
<dbReference type="PANTHER" id="PTHR13270:SF14">
    <property type="entry name" value="SEX DETERMINATION AND DOSAGE COMPENSATION PROTEIN SDC-2"/>
    <property type="match status" value="1"/>
</dbReference>
<name>RH2B_PLAF7</name>
<comment type="function">
    <molecule>Reticulocyte-binding protein homolog 2b</molecule>
    <text evidence="6 11">During the asexual blood stage, binds to a chymotrypsin sensitive, neuraminidase and trypsin resistant receptor on the surface of the host erythrocyte and thus is involved in merozoite invasion (PubMed:12606570, PubMed:27438226). The various processed forms have different binding affinities for the erythrocyte receptor; full length form binds with higher affinity followed by the 250 kDa form and finally the 300 kDa form while the 160 kDa form does not bind erythrocytes (PubMed:27438226). After merozoite attachment and reorientation, RH2b binding to its erythrocyte receptor triggers an increase in intracellular Ca(2+) within the parasite resulting in the release of microneme proteins such as EBA175 which in turn leads to the formation of the tight junction between parasite and host cell (PubMed:27438226).</text>
</comment>
<comment type="function">
    <molecule>Reticulocyte-binding protein homolog 2b 85 kDa form</molecule>
    <text evidence="8">During the asexual blood stage, binds to a trypsin-resistant and chymotrypsin and neuraminidase sensitive receptor on the surface of the host erythrocyte and thus is involved in merozoite invasion.</text>
</comment>
<comment type="subunit">
    <text evidence="8 9">Forms a heterodimer composed of the 297 kDa and the 85 kDa forms (PubMed:21698217). Interacts (via YF motif) with aldolase FBPA (PubMed:22991428).</text>
</comment>
<comment type="subcellular location">
    <subcellularLocation>
        <location evidence="11">Cell membrane</location>
        <topology evidence="14">Single-pass type I membrane protein</topology>
    </subcellularLocation>
    <subcellularLocation>
        <location evidence="5 11">Cytoplasmic vesicle</location>
        <location evidence="5 11">Secretory vesicle</location>
        <location evidence="5 11">Rhoptry</location>
    </subcellularLocation>
    <subcellularLocation>
        <location evidence="11">Cell junction</location>
        <location evidence="11">Tight junction</location>
    </subcellularLocation>
    <subcellularLocation>
        <location evidence="11">Secreted</location>
    </subcellularLocation>
    <text evidence="5 8 11">Localizes to the rhoptry neck at the apical end of the merozoite (PubMed:12228308, PubMed:27438226). During merozoite invasion, mainly localizes to the tight junction formed between the parasite and the host erythrocyte membranes and then moves with the tight junction to the posterior end as the parasite enters the erythrocyte (PubMed:27438226). Also, the different processed forms are released from the membrane following proteolytic cleavage (PubMed:27438226). The remaining 7 kDa processed transmembrane fragment is incorporated into the newly formed ring stage (PubMed:21698217).</text>
</comment>
<comment type="subcellular location">
    <molecule>Reticulocyte-binding protein homolog 2b 85 kDa form</molecule>
    <subcellularLocation>
        <location evidence="8">Secreted</location>
    </subcellularLocation>
    <subcellularLocation>
        <location evidence="8">Cell membrane</location>
        <topology evidence="8">Peripheral membrane protein</topology>
        <orientation evidence="8">Extracellular side</orientation>
    </subcellularLocation>
    <text evidence="8">In mature schizont, co-localizes to the apical end of the schizont and the merozoite with reticulocyte-binding protein homolog 2b 297 kDa form. During merozoite invasion, shed from the cell surface.</text>
</comment>
<comment type="subcellular location">
    <molecule>Reticulocyte-binding protein homolog 2b 297 kDa form</molecule>
    <subcellularLocation>
        <location evidence="8">Secreted</location>
    </subcellularLocation>
    <subcellularLocation>
        <location evidence="8">Cell membrane</location>
        <topology evidence="14">Single-pass type I membrane protein</topology>
    </subcellularLocation>
    <text evidence="8">In mature schizont, co-localizes to the apical end of the schizont and the merozoite with reticulocyte-binding protein homolog 2b 85 kDa form. During merozoite invasion, shed from the cell surface.</text>
</comment>
<comment type="developmental stage">
    <text evidence="5 6 8 11">Expressed during parasite asexual blood stages, specifically at the late schizont stage prior to merozoite release and in free merozoites (at protein level).</text>
</comment>
<comment type="PTM">
    <text evidence="5 8 11">Proteolytically processed into multiple fragments following schizont rupture (PubMed:12228308, PubMed:21698217, PubMed:27438226). In the mature schizont stage prior to merozoite release, full length RH2b is processed post-Golgi into C-terminal 297 kDa and N-terminal 85 kDa forms (PubMed:21698217, PubMed:27438226). Alternatively, full length RH2b can also be processed into C-terminal 250 kDa and N-terminal 130 kDa forms (PubMed:27438226). During merozoite invasion of host erythrocytes, further processing occurs generating a 160 kDa form (PubMed:27438226). At the same time, the C-terminal transmembrane region is cleaved, probably by a rhomboid protease, to shed all the different processed protein forms from the membrane leaving a transmembrane 7 kDa form on the merozoite surface (PubMed:21698217, PubMed:27438226).</text>
</comment>
<comment type="PTM">
    <text evidence="10">Phosphorylated at Ser-3233 by CK2alpha in schizonts.</text>
</comment>
<comment type="disruption phenotype">
    <text evidence="6">Does not affect merozoite invasion of host erythrocytes (PubMed:12606570). However, merozoites invade either neuraminidase- or trypsin-treated erythrocytes at a significantly lower efficiency than the wild-type (PubMed:12606570). Invasion of erythrocytes treated with both neuraminidase and trypsin is further impaired (PubMed:12606570).</text>
</comment>
<comment type="biotechnology">
    <text evidence="7 8 11">Possible candidate for an effective malaria vaccine as determined by epitope response in sera (PubMed:17653272). Antibodies against the erythrocyte binding domain (EBD) prevent merozoite invasion of host erythrocytes (PubMed:21698217, PubMed:27438226). However, inhibition efficiency varies across isolates due to the variation in RH2b expression levels and can also be affected by the expression levels of RH1, another erythrocyte binding receptor (PubMed:21698217).</text>
</comment>
<comment type="miscellaneous">
    <text evidence="4 5 6 14 15">RH2b expression levels greatly vary between isolates; levels are high in isolates 3D7, K1, 7G8, Pf120 and W2mef, low in isolates HB3 and T996, and undetectable in isolates MCAMP, FCB1, T994 and FCR3 (PubMed:12228308, PubMed:12606570). RH2b gene is missing in isolate D10 (PubMed:11160005). A similar variation in expression affects other reticulocyte-binding proteins such as RH2a and RH1 (PubMed:12228308). The expression pattern of RH1, RH2a and RH2b allows the strain to use different invasion pathways to enter erythrocytes (Probable). This provides a mechanism of phenotypic variation to evade host immune responses and to adapt to the polymorphic nature of the erythrocyte receptors in human populations (Probable).</text>
</comment>
<feature type="signal peptide" evidence="1">
    <location>
        <begin position="1"/>
        <end position="24"/>
    </location>
</feature>
<feature type="chain" id="PRO_0000399036" description="Reticulocyte-binding protein homolog 2b" evidence="1">
    <location>
        <begin position="25"/>
        <end position="3254"/>
    </location>
</feature>
<feature type="chain" id="PRO_0000453542" description="Reticulocyte-binding protein homolog 2b 85 kDa form" evidence="8">
    <location>
        <begin position="25"/>
        <end status="unknown"/>
    </location>
</feature>
<feature type="chain" id="PRO_0000453543" description="Reticulocyte-binding protein homolog 2b 297 kDa form" evidence="8">
    <location>
        <begin status="unknown"/>
        <end position="3254"/>
    </location>
</feature>
<feature type="topological domain" description="Extracellular" evidence="14">
    <location>
        <begin position="25"/>
        <end position="3187"/>
    </location>
</feature>
<feature type="transmembrane region" description="Helical" evidence="1">
    <location>
        <begin position="3188"/>
        <end position="3208"/>
    </location>
</feature>
<feature type="topological domain" description="Cytoplasmic" evidence="14">
    <location>
        <begin position="3209"/>
        <end position="3254"/>
    </location>
</feature>
<feature type="repeat" description="LRR 1" evidence="1">
    <location>
        <begin position="182"/>
        <end position="206"/>
    </location>
</feature>
<feature type="repeat" description="LRR 2" evidence="1">
    <location>
        <begin position="300"/>
        <end position="323"/>
    </location>
</feature>
<feature type="repeat" description="LRR 3" evidence="1">
    <location>
        <begin position="419"/>
        <end position="443"/>
    </location>
</feature>
<feature type="repeat" description="LRR 4" evidence="1">
    <location>
        <begin position="659"/>
        <end position="683"/>
    </location>
</feature>
<feature type="repeat" description="LRR 5" evidence="1">
    <location>
        <begin position="757"/>
        <end position="778"/>
    </location>
</feature>
<feature type="repeat" description="LRR 6" evidence="1">
    <location>
        <begin position="801"/>
        <end position="824"/>
    </location>
</feature>
<feature type="repeat" description="LRR 7" evidence="1">
    <location>
        <begin position="1116"/>
        <end position="1139"/>
    </location>
</feature>
<feature type="repeat" description="LRR 8" evidence="1">
    <location>
        <begin position="1305"/>
        <end position="1328"/>
    </location>
</feature>
<feature type="repeat" description="LRR 9" evidence="1">
    <location>
        <begin position="1336"/>
        <end position="1362"/>
    </location>
</feature>
<feature type="repeat" description="LRR 10" evidence="1">
    <location>
        <begin position="1438"/>
        <end position="1461"/>
    </location>
</feature>
<feature type="repeat" description="LRR 11" evidence="1">
    <location>
        <begin position="1536"/>
        <end position="1561"/>
    </location>
</feature>
<feature type="repeat" description="LRR 12" evidence="1">
    <location>
        <begin position="1628"/>
        <end position="1652"/>
    </location>
</feature>
<feature type="repeat" description="LRR 13" evidence="1">
    <location>
        <begin position="1795"/>
        <end position="1818"/>
    </location>
</feature>
<feature type="repeat" description="LRR 14" evidence="1">
    <location>
        <begin position="1890"/>
        <end position="1913"/>
    </location>
</feature>
<feature type="repeat" description="LRR 15" evidence="1">
    <location>
        <begin position="2014"/>
        <end position="2041"/>
    </location>
</feature>
<feature type="repeat" description="LRR 16" evidence="1">
    <location>
        <begin position="2052"/>
        <end position="2076"/>
    </location>
</feature>
<feature type="repeat" description="LRR 17" evidence="1">
    <location>
        <begin position="2126"/>
        <end position="2152"/>
    </location>
</feature>
<feature type="repeat" description="LRR 18" evidence="1">
    <location>
        <begin position="2345"/>
        <end position="2368"/>
    </location>
</feature>
<feature type="repeat" description="LRR 19" evidence="1">
    <location>
        <begin position="2409"/>
        <end position="2434"/>
    </location>
</feature>
<feature type="repeat" description="LRR 20" evidence="1">
    <location>
        <begin position="2522"/>
        <end position="2550"/>
    </location>
</feature>
<feature type="repeat" description="LRR 21" evidence="1">
    <location>
        <begin position="2572"/>
        <end position="2599"/>
    </location>
</feature>
<feature type="repeat" description="LRR 22" evidence="1">
    <location>
        <begin position="2650"/>
        <end position="2671"/>
    </location>
</feature>
<feature type="repeat" description="LRR 23" evidence="1">
    <location>
        <begin position="3105"/>
        <end position="3128"/>
    </location>
</feature>
<feature type="region of interest" description="Erythrocyte binding domain (EBD)" evidence="8">
    <location>
        <begin position="446"/>
        <end position="557"/>
    </location>
</feature>
<feature type="region of interest" description="Disordered" evidence="3">
    <location>
        <begin position="1173"/>
        <end position="1195"/>
    </location>
</feature>
<feature type="region of interest" description="Disordered" evidence="3">
    <location>
        <begin position="2680"/>
        <end position="2874"/>
    </location>
</feature>
<feature type="region of interest" description="Disordered" evidence="3">
    <location>
        <begin position="2909"/>
        <end position="2969"/>
    </location>
</feature>
<feature type="region of interest" description="Disordered" evidence="3">
    <location>
        <begin position="2991"/>
        <end position="3018"/>
    </location>
</feature>
<feature type="region of interest" description="Disordered" evidence="3">
    <location>
        <begin position="3035"/>
        <end position="3097"/>
    </location>
</feature>
<feature type="coiled-coil region" evidence="1">
    <location>
        <begin position="490"/>
        <end position="517"/>
    </location>
</feature>
<feature type="coiled-coil region" evidence="1">
    <location>
        <begin position="1805"/>
        <end position="1842"/>
    </location>
</feature>
<feature type="coiled-coil region" evidence="1">
    <location>
        <begin position="2661"/>
        <end position="2794"/>
    </location>
</feature>
<feature type="short sequence motif" description="Mediates the interaction with FBPA" evidence="9">
    <location>
        <begin position="3253"/>
        <end position="3254"/>
    </location>
</feature>
<feature type="compositionally biased region" description="Basic and acidic residues" evidence="3">
    <location>
        <begin position="1173"/>
        <end position="1185"/>
    </location>
</feature>
<feature type="compositionally biased region" description="Basic and acidic residues" evidence="3">
    <location>
        <begin position="2680"/>
        <end position="2783"/>
    </location>
</feature>
<feature type="compositionally biased region" description="Basic and acidic residues" evidence="3">
    <location>
        <begin position="2791"/>
        <end position="2819"/>
    </location>
</feature>
<feature type="compositionally biased region" description="Polar residues" evidence="3">
    <location>
        <begin position="2823"/>
        <end position="2840"/>
    </location>
</feature>
<feature type="compositionally biased region" description="Polar residues" evidence="3">
    <location>
        <begin position="2849"/>
        <end position="2874"/>
    </location>
</feature>
<feature type="compositionally biased region" description="Polar residues" evidence="3">
    <location>
        <begin position="2909"/>
        <end position="2927"/>
    </location>
</feature>
<feature type="compositionally biased region" description="Low complexity" evidence="3">
    <location>
        <begin position="2928"/>
        <end position="2939"/>
    </location>
</feature>
<feature type="compositionally biased region" description="Basic and acidic residues" evidence="3">
    <location>
        <begin position="2956"/>
        <end position="2969"/>
    </location>
</feature>
<feature type="compositionally biased region" description="Basic and acidic residues" evidence="3">
    <location>
        <begin position="3035"/>
        <end position="3044"/>
    </location>
</feature>
<feature type="compositionally biased region" description="Low complexity" evidence="3">
    <location>
        <begin position="3046"/>
        <end position="3056"/>
    </location>
</feature>
<feature type="compositionally biased region" description="Basic and acidic residues" evidence="3">
    <location>
        <begin position="3071"/>
        <end position="3096"/>
    </location>
</feature>
<feature type="modified residue" description="Phosphoserine; by CK2" evidence="10">
    <location>
        <position position="3233"/>
    </location>
</feature>
<feature type="glycosylation site" description="N-linked (GlcNAc...) asparagine" evidence="2">
    <location>
        <position position="43"/>
    </location>
</feature>
<feature type="glycosylation site" description="N-linked (GlcNAc...) asparagine" evidence="2">
    <location>
        <position position="105"/>
    </location>
</feature>
<feature type="glycosylation site" description="N-linked (GlcNAc...) asparagine" evidence="2">
    <location>
        <position position="123"/>
    </location>
</feature>
<feature type="glycosylation site" description="N-linked (GlcNAc...) asparagine" evidence="2">
    <location>
        <position position="159"/>
    </location>
</feature>
<feature type="glycosylation site" description="N-linked (GlcNAc...) asparagine" evidence="2">
    <location>
        <position position="575"/>
    </location>
</feature>
<feature type="glycosylation site" description="N-linked (GlcNAc...) asparagine" evidence="2">
    <location>
        <position position="579"/>
    </location>
</feature>
<feature type="glycosylation site" description="N-linked (GlcNAc...) asparagine" evidence="2">
    <location>
        <position position="635"/>
    </location>
</feature>
<feature type="glycosylation site" description="N-linked (GlcNAc...) asparagine" evidence="2">
    <location>
        <position position="675"/>
    </location>
</feature>
<feature type="glycosylation site" description="N-linked (GlcNAc...) asparagine" evidence="2">
    <location>
        <position position="724"/>
    </location>
</feature>
<feature type="glycosylation site" description="N-linked (GlcNAc...) asparagine" evidence="2">
    <location>
        <position position="745"/>
    </location>
</feature>
<feature type="glycosylation site" description="N-linked (GlcNAc...) asparagine" evidence="2">
    <location>
        <position position="781"/>
    </location>
</feature>
<feature type="glycosylation site" description="N-linked (GlcNAc...) asparagine" evidence="2">
    <location>
        <position position="837"/>
    </location>
</feature>
<feature type="glycosylation site" description="N-linked (GlcNAc...) asparagine" evidence="2">
    <location>
        <position position="994"/>
    </location>
</feature>
<feature type="glycosylation site" description="N-linked (GlcNAc...) asparagine" evidence="2">
    <location>
        <position position="1166"/>
    </location>
</feature>
<feature type="glycosylation site" description="N-linked (GlcNAc...) asparagine" evidence="2">
    <location>
        <position position="1320"/>
    </location>
</feature>
<feature type="glycosylation site" description="N-linked (GlcNAc...) asparagine" evidence="2">
    <location>
        <position position="1332"/>
    </location>
</feature>
<feature type="glycosylation site" description="N-linked (GlcNAc...) asparagine" evidence="2">
    <location>
        <position position="1398"/>
    </location>
</feature>
<feature type="glycosylation site" description="N-linked (GlcNAc...) asparagine" evidence="2">
    <location>
        <position position="1409"/>
    </location>
</feature>
<feature type="glycosylation site" description="N-linked (GlcNAc...) asparagine" evidence="2">
    <location>
        <position position="1513"/>
    </location>
</feature>
<feature type="glycosylation site" description="N-linked (GlcNAc...) asparagine" evidence="2">
    <location>
        <position position="1705"/>
    </location>
</feature>
<feature type="glycosylation site" description="N-linked (GlcNAc...) asparagine" evidence="2">
    <location>
        <position position="1742"/>
    </location>
</feature>
<feature type="glycosylation site" description="N-linked (GlcNAc...) asparagine" evidence="2">
    <location>
        <position position="1785"/>
    </location>
</feature>
<feature type="glycosylation site" description="N-linked (GlcNAc...) asparagine" evidence="2">
    <location>
        <position position="1900"/>
    </location>
</feature>
<feature type="glycosylation site" description="N-linked (GlcNAc...) asparagine" evidence="2">
    <location>
        <position position="1927"/>
    </location>
</feature>
<feature type="glycosylation site" description="N-linked (GlcNAc...) asparagine" evidence="2">
    <location>
        <position position="1971"/>
    </location>
</feature>
<feature type="glycosylation site" description="N-linked (GlcNAc...) asparagine" evidence="2">
    <location>
        <position position="2113"/>
    </location>
</feature>
<feature type="glycosylation site" description="N-linked (GlcNAc...) asparagine" evidence="2">
    <location>
        <position position="2212"/>
    </location>
</feature>
<feature type="glycosylation site" description="N-linked (GlcNAc...) asparagine" evidence="2">
    <location>
        <position position="2268"/>
    </location>
</feature>
<feature type="glycosylation site" description="N-linked (GlcNAc...) asparagine" evidence="2">
    <location>
        <position position="2346"/>
    </location>
</feature>
<feature type="glycosylation site" description="N-linked (GlcNAc...) asparagine" evidence="2">
    <location>
        <position position="2421"/>
    </location>
</feature>
<feature type="glycosylation site" description="N-linked (GlcNAc...) asparagine" evidence="2">
    <location>
        <position position="2456"/>
    </location>
</feature>
<feature type="glycosylation site" description="N-linked (GlcNAc...) asparagine" evidence="2">
    <location>
        <position position="2473"/>
    </location>
</feature>
<feature type="glycosylation site" description="N-linked (GlcNAc...) asparagine" evidence="2">
    <location>
        <position position="2484"/>
    </location>
</feature>
<feature type="glycosylation site" description="N-linked (GlcNAc...) asparagine" evidence="2">
    <location>
        <position position="2537"/>
    </location>
</feature>
<feature type="glycosylation site" description="N-linked (GlcNAc...) asparagine" evidence="2">
    <location>
        <position position="2550"/>
    </location>
</feature>
<feature type="glycosylation site" description="N-linked (GlcNAc...) asparagine" evidence="2">
    <location>
        <position position="2824"/>
    </location>
</feature>
<feature type="glycosylation site" description="N-linked (GlcNAc...) asparagine" evidence="2">
    <location>
        <position position="2909"/>
    </location>
</feature>
<feature type="glycosylation site" description="N-linked (GlcNAc...) asparagine" evidence="2">
    <location>
        <position position="2931"/>
    </location>
</feature>
<feature type="glycosylation site" description="N-linked (GlcNAc...) asparagine" evidence="2">
    <location>
        <position position="2936"/>
    </location>
</feature>
<feature type="glycosylation site" description="N-linked (GlcNAc...) asparagine" evidence="2">
    <location>
        <position position="3080"/>
    </location>
</feature>
<reference evidence="17" key="1">
    <citation type="journal article" date="2001" name="Infect. Immun.">
        <title>Identification of proteins from Plasmodium falciparum that are homologous to reticulocyte binding proteins in Plasmodium vivax.</title>
        <authorList>
            <person name="Triglia T."/>
            <person name="Thompson J."/>
            <person name="Caruana S.R."/>
            <person name="Delorenzi M."/>
            <person name="Speed T."/>
            <person name="Cowman A.F."/>
        </authorList>
    </citation>
    <scope>NUCLEOTIDE SEQUENCE [GENOMIC DNA]</scope>
</reference>
<reference evidence="18" key="2">
    <citation type="journal article" date="2005" name="Am. J. Trop. Med. Hyg.">
        <title>Dramatic difference in diversity between Plasmodium falciparum and Plasmodium vivax reticulocyte binding-like genes.</title>
        <authorList>
            <person name="Rayner J.C."/>
            <person name="Tran T.M."/>
            <person name="Corredor V."/>
            <person name="Huber C.S."/>
            <person name="Barnwell J.W."/>
            <person name="Galinski M.R."/>
        </authorList>
    </citation>
    <scope>NUCLEOTIDE SEQUENCE [GENOMIC DNA]</scope>
    <source>
        <strain evidence="18">3D7</strain>
    </source>
</reference>
<reference evidence="16" key="3">
    <citation type="submission" date="2000-07" db="EMBL/GenBank/DDBJ databases">
        <title>A novel large antigen from Plasmodium falciparum encoding a reticulocyte binding protein analog.</title>
        <authorList>
            <person name="Matesanz F."/>
            <person name="Alcina A."/>
        </authorList>
    </citation>
    <scope>NUCLEOTIDE SEQUENCE [GENOMIC DNA]</scope>
</reference>
<reference key="4">
    <citation type="journal article" date="2002" name="Nature">
        <title>Genome sequence of the human malaria parasite Plasmodium falciparum.</title>
        <authorList>
            <person name="Gardner M.J."/>
            <person name="Hall N."/>
            <person name="Fung E."/>
            <person name="White O."/>
            <person name="Berriman M."/>
            <person name="Hyman R.W."/>
            <person name="Carlton J.M."/>
            <person name="Pain A."/>
            <person name="Nelson K.E."/>
            <person name="Bowman S."/>
            <person name="Paulsen I.T."/>
            <person name="James K.D."/>
            <person name="Eisen J.A."/>
            <person name="Rutherford K.M."/>
            <person name="Salzberg S.L."/>
            <person name="Craig A."/>
            <person name="Kyes S."/>
            <person name="Chan M.-S."/>
            <person name="Nene V."/>
            <person name="Shallom S.J."/>
            <person name="Suh B."/>
            <person name="Peterson J."/>
            <person name="Angiuoli S."/>
            <person name="Pertea M."/>
            <person name="Allen J."/>
            <person name="Selengut J."/>
            <person name="Haft D."/>
            <person name="Mather M.W."/>
            <person name="Vaidya A.B."/>
            <person name="Martin D.M.A."/>
            <person name="Fairlamb A.H."/>
            <person name="Fraunholz M.J."/>
            <person name="Roos D.S."/>
            <person name="Ralph S.A."/>
            <person name="McFadden G.I."/>
            <person name="Cummings L.M."/>
            <person name="Subramanian G.M."/>
            <person name="Mungall C."/>
            <person name="Venter J.C."/>
            <person name="Carucci D.J."/>
            <person name="Hoffman S.L."/>
            <person name="Newbold C."/>
            <person name="Davis R.W."/>
            <person name="Fraser C.M."/>
            <person name="Barrell B.G."/>
        </authorList>
    </citation>
    <scope>NUCLEOTIDE SEQUENCE [LARGE SCALE GENOMIC DNA]</scope>
    <source>
        <strain>3D7</strain>
    </source>
</reference>
<reference evidence="19" key="5">
    <citation type="journal article" date="2002" name="Nature">
        <title>Sequence of Plasmodium falciparum chromosomes 1, 3-9 and 13.</title>
        <authorList>
            <person name="Hall N."/>
            <person name="Pain A."/>
            <person name="Berriman M."/>
            <person name="Churcher C.M."/>
            <person name="Harris B."/>
            <person name="Harris D."/>
            <person name="Mungall K.L."/>
            <person name="Bowman S."/>
            <person name="Atkin R."/>
            <person name="Baker S."/>
            <person name="Barron A."/>
            <person name="Brooks K."/>
            <person name="Buckee C.O."/>
            <person name="Burrows C."/>
            <person name="Cherevach I."/>
            <person name="Chillingworth C."/>
            <person name="Chillingworth T."/>
            <person name="Christodoulou Z."/>
            <person name="Clark L."/>
            <person name="Clark R."/>
            <person name="Corton C."/>
            <person name="Cronin A."/>
            <person name="Davies R.M."/>
            <person name="Davis P."/>
            <person name="Dear P."/>
            <person name="Dearden F."/>
            <person name="Doggett J."/>
            <person name="Feltwell T."/>
            <person name="Goble A."/>
            <person name="Goodhead I."/>
            <person name="Gwilliam R."/>
            <person name="Hamlin N."/>
            <person name="Hance Z."/>
            <person name="Harper D."/>
            <person name="Hauser H."/>
            <person name="Hornsby T."/>
            <person name="Holroyd S."/>
            <person name="Horrocks P."/>
            <person name="Humphray S."/>
            <person name="Jagels K."/>
            <person name="James K.D."/>
            <person name="Johnson D."/>
            <person name="Kerhornou A."/>
            <person name="Knights A."/>
            <person name="Konfortov B."/>
            <person name="Kyes S."/>
            <person name="Larke N."/>
            <person name="Lawson D."/>
            <person name="Lennard N."/>
            <person name="Line A."/>
            <person name="Maddison M."/>
            <person name="Mclean J."/>
            <person name="Mooney P."/>
            <person name="Moule S."/>
            <person name="Murphy L."/>
            <person name="Oliver K."/>
            <person name="Ormond D."/>
            <person name="Price C."/>
            <person name="Quail M.A."/>
            <person name="Rabbinowitsch E."/>
            <person name="Rajandream M.A."/>
            <person name="Rutter S."/>
            <person name="Rutherford K.M."/>
            <person name="Sanders M."/>
            <person name="Simmonds M."/>
            <person name="Seeger K."/>
            <person name="Sharp S."/>
            <person name="Smith R."/>
            <person name="Squares R."/>
            <person name="Squares S."/>
            <person name="Stevens K."/>
            <person name="Taylor K."/>
            <person name="Tivey A."/>
            <person name="Unwin L."/>
            <person name="Whitehead S."/>
            <person name="Woodward J.R."/>
            <person name="Sulston J.E."/>
            <person name="Craig A."/>
            <person name="Newbold C."/>
            <person name="Barrell B.G."/>
        </authorList>
    </citation>
    <scope>NUCLEOTIDE SEQUENCE [LARGE SCALE GENOMIC DNA]</scope>
    <source>
        <strain>3D7</strain>
    </source>
</reference>
<reference key="6">
    <citation type="journal article" date="2002" name="Infect. Immun.">
        <title>Variation in the expression of a Plasmodium falciparum protein family implicated in erythrocyte invasion.</title>
        <authorList>
            <person name="Taylor H.M."/>
            <person name="Grainger M."/>
            <person name="Holder A.A."/>
        </authorList>
    </citation>
    <scope>SUBCELLULAR LOCATION</scope>
    <scope>DEVELOPMENTAL STAGE</scope>
    <scope>PROTEOLYTIC CLEAVAGE</scope>
</reference>
<reference key="7">
    <citation type="journal article" date="2003" name="EMBO J.">
        <title>Phenotypic variation of Plasmodium falciparum merozoite proteins directs receptor targeting for invasion of human erythrocytes.</title>
        <authorList>
            <person name="Duraisingh M.T."/>
            <person name="Triglia T."/>
            <person name="Ralph S.A."/>
            <person name="Rayner J.C."/>
            <person name="Barnwell J.W."/>
            <person name="McFadden G.I."/>
            <person name="Cowman A.F."/>
        </authorList>
    </citation>
    <scope>FUNCTION</scope>
    <scope>DEVELOPMENTAL STAGE</scope>
    <scope>DISRUPTION PHENOTYPE</scope>
</reference>
<reference evidence="14" key="8">
    <citation type="journal article" date="2007" name="PLoS ONE">
        <title>Rapid identification of malaria vaccine candidates based on alpha-helical coiled coil protein motif.</title>
        <authorList>
            <person name="Villard V."/>
            <person name="Agak G.W."/>
            <person name="Frank G."/>
            <person name="Jafarshad A."/>
            <person name="Servis C."/>
            <person name="Nebie I."/>
            <person name="Sirima S.B."/>
            <person name="Felger I."/>
            <person name="Arevalo-Herrera M."/>
            <person name="Herrera S."/>
            <person name="Heitz F."/>
            <person name="Baecker V."/>
            <person name="Druilhe P."/>
            <person name="Kajava A.V."/>
            <person name="Corradin G."/>
        </authorList>
    </citation>
    <scope>SYNTHESIS OF 2144-2180</scope>
    <scope>POSSIBLE CANDIDATE MALARIA EPITOPE</scope>
</reference>
<reference key="9">
    <citation type="journal article" date="2011" name="PLoS Pathog.">
        <title>Plasmodium falciparum merozoite invasion is inhibited by antibodies that target the PfRh2a and b binding domains.</title>
        <authorList>
            <person name="Triglia T."/>
            <person name="Chen L."/>
            <person name="Lopaticki S."/>
            <person name="Dekiwadia C."/>
            <person name="Riglar D.T."/>
            <person name="Hodder A.N."/>
            <person name="Ralph S.A."/>
            <person name="Baum J."/>
            <person name="Cowman A.F."/>
        </authorList>
    </citation>
    <scope>FUNCTION</scope>
    <scope>SUBUNIT</scope>
    <scope>SUBCELLULAR LOCATION</scope>
    <scope>DEVELOPMENTAL STAGE</scope>
    <scope>BIOTECHNOLOGY</scope>
    <scope>PROTEOLYTIC CLEAVAGE</scope>
</reference>
<reference key="10">
    <citation type="journal article" date="2012" name="MBio">
        <title>Binding of aldolase and glyceraldehyde-3-phosphate dehydrogenase to the cytoplasmic tails of Plasmodium falciparum merozoite duffy binding-like and reticulocyte homology ligands.</title>
        <authorList>
            <person name="Pal-Bhowmick I."/>
            <person name="Andersen J."/>
            <person name="Srinivasan P."/>
            <person name="Narum D.L."/>
            <person name="Bosch J."/>
            <person name="Miller L.H."/>
        </authorList>
    </citation>
    <scope>INTERACTION WITH FBPA</scope>
    <scope>MOTIF</scope>
</reference>
<reference key="11">
    <citation type="journal article" date="2013" name="Biochem. J.">
        <title>Specific phosphorylation of the PfRh2b invasion ligand of Plasmodium falciparum.</title>
        <authorList>
            <person name="Engelberg K."/>
            <person name="Paul A.S."/>
            <person name="Prinz B."/>
            <person name="Kono M."/>
            <person name="Ching W."/>
            <person name="Heincke D."/>
            <person name="Dobner T."/>
            <person name="Spielmann T."/>
            <person name="Duraisingh M.T."/>
            <person name="Gilberger T.W."/>
        </authorList>
    </citation>
    <scope>PHOSPHORYLATION AT SER-3233</scope>
</reference>
<reference key="12">
    <citation type="journal article" date="2016" name="Mol. Microbiol.">
        <title>PfRH2b specific monoclonal antibodies inhibit merozoite invasion.</title>
        <authorList>
            <person name="Aniweh Y."/>
            <person name="Gao X."/>
            <person name="Gunalan K."/>
            <person name="Preiser P.R."/>
        </authorList>
    </citation>
    <scope>FUNCTION</scope>
    <scope>SUBCELLULAR LOCATION</scope>
    <scope>DEVELOPMENTAL STAGE</scope>
    <scope>BIOTECHNOLOGY</scope>
    <scope>PROTEOLYTIC CLEAVAGE</scope>
</reference>
<evidence type="ECO:0000255" key="1"/>
<evidence type="ECO:0000255" key="2">
    <source>
        <dbReference type="PROSITE-ProRule" id="PRU00498"/>
    </source>
</evidence>
<evidence type="ECO:0000256" key="3">
    <source>
        <dbReference type="SAM" id="MobiDB-lite"/>
    </source>
</evidence>
<evidence type="ECO:0000269" key="4">
    <source>
    </source>
</evidence>
<evidence type="ECO:0000269" key="5">
    <source>
    </source>
</evidence>
<evidence type="ECO:0000269" key="6">
    <source>
    </source>
</evidence>
<evidence type="ECO:0000269" key="7">
    <source>
    </source>
</evidence>
<evidence type="ECO:0000269" key="8">
    <source>
    </source>
</evidence>
<evidence type="ECO:0000269" key="9">
    <source>
    </source>
</evidence>
<evidence type="ECO:0000269" key="10">
    <source>
    </source>
</evidence>
<evidence type="ECO:0000269" key="11">
    <source>
    </source>
</evidence>
<evidence type="ECO:0000303" key="12">
    <source>
    </source>
</evidence>
<evidence type="ECO:0000303" key="13">
    <source>
    </source>
</evidence>
<evidence type="ECO:0000305" key="14"/>
<evidence type="ECO:0000305" key="15">
    <source>
    </source>
</evidence>
<evidence type="ECO:0000312" key="16">
    <source>
        <dbReference type="EMBL" id="AAG02259.1"/>
    </source>
</evidence>
<evidence type="ECO:0000312" key="17">
    <source>
        <dbReference type="EMBL" id="AAK19245.1"/>
    </source>
</evidence>
<evidence type="ECO:0000312" key="18">
    <source>
        <dbReference type="EMBL" id="AAN39447.1"/>
    </source>
</evidence>
<evidence type="ECO:0000312" key="19">
    <source>
        <dbReference type="EMBL" id="CAX64332.2"/>
    </source>
</evidence>
<protein>
    <recommendedName>
        <fullName evidence="13">Reticulocyte-binding protein homolog 2b</fullName>
        <shortName evidence="12">PfR2Hb</shortName>
        <shortName evidence="13">PfRH2b</shortName>
    </recommendedName>
    <component>
        <recommendedName>
            <fullName evidence="14">Reticulocyte-binding protein homolog 2b 85 kDa form</fullName>
        </recommendedName>
    </component>
    <component>
        <recommendedName>
            <fullName evidence="14">Reticulocyte-binding protein homolog 2b 297 kDa form</fullName>
        </recommendedName>
    </component>
</protein>